<feature type="chain" id="PRO_1000026275" description="Nucleoside diphosphate kinase">
    <location>
        <begin position="1"/>
        <end position="143"/>
    </location>
</feature>
<feature type="active site" description="Pros-phosphohistidine intermediate" evidence="1">
    <location>
        <position position="117"/>
    </location>
</feature>
<feature type="binding site" evidence="1">
    <location>
        <position position="11"/>
    </location>
    <ligand>
        <name>ATP</name>
        <dbReference type="ChEBI" id="CHEBI:30616"/>
    </ligand>
</feature>
<feature type="binding site" evidence="1">
    <location>
        <position position="59"/>
    </location>
    <ligand>
        <name>ATP</name>
        <dbReference type="ChEBI" id="CHEBI:30616"/>
    </ligand>
</feature>
<feature type="binding site" evidence="1">
    <location>
        <position position="87"/>
    </location>
    <ligand>
        <name>ATP</name>
        <dbReference type="ChEBI" id="CHEBI:30616"/>
    </ligand>
</feature>
<feature type="binding site" evidence="1">
    <location>
        <position position="93"/>
    </location>
    <ligand>
        <name>ATP</name>
        <dbReference type="ChEBI" id="CHEBI:30616"/>
    </ligand>
</feature>
<feature type="binding site" evidence="1">
    <location>
        <position position="104"/>
    </location>
    <ligand>
        <name>ATP</name>
        <dbReference type="ChEBI" id="CHEBI:30616"/>
    </ligand>
</feature>
<feature type="binding site" evidence="1">
    <location>
        <position position="114"/>
    </location>
    <ligand>
        <name>ATP</name>
        <dbReference type="ChEBI" id="CHEBI:30616"/>
    </ligand>
</feature>
<keyword id="KW-0067">ATP-binding</keyword>
<keyword id="KW-0963">Cytoplasm</keyword>
<keyword id="KW-0418">Kinase</keyword>
<keyword id="KW-0460">Magnesium</keyword>
<keyword id="KW-0479">Metal-binding</keyword>
<keyword id="KW-0546">Nucleotide metabolism</keyword>
<keyword id="KW-0547">Nucleotide-binding</keyword>
<keyword id="KW-0597">Phosphoprotein</keyword>
<keyword id="KW-0808">Transferase</keyword>
<protein>
    <recommendedName>
        <fullName evidence="1">Nucleoside diphosphate kinase</fullName>
        <shortName evidence="1">NDK</shortName>
        <shortName evidence="1">NDP kinase</shortName>
        <ecNumber evidence="1">2.7.4.6</ecNumber>
    </recommendedName>
    <alternativeName>
        <fullName evidence="1">Nucleoside-2-P kinase</fullName>
    </alternativeName>
</protein>
<gene>
    <name evidence="1" type="primary">ndk</name>
    <name type="ordered locus">PA14_14820</name>
</gene>
<sequence length="143" mass="15592">MALQRTLSIIKPDAVSKNVIGEILTRFEKAGLRVVAAKMVQLSEREAGGFYAEHKERPFFKDLVSFMTSGPVVVQVLEGEDAIAKNRELMGATDPKKADAGTIRADFAVSIDENAVHGSDSEASAAREIAYFFAATEVCERIR</sequence>
<accession>Q02RW1</accession>
<proteinExistence type="inferred from homology"/>
<dbReference type="EC" id="2.7.4.6" evidence="1"/>
<dbReference type="EMBL" id="CP000438">
    <property type="protein sequence ID" value="ABJ13068.1"/>
    <property type="molecule type" value="Genomic_DNA"/>
</dbReference>
<dbReference type="RefSeq" id="WP_003092811.1">
    <property type="nucleotide sequence ID" value="NZ_CP034244.1"/>
</dbReference>
<dbReference type="SMR" id="Q02RW1"/>
<dbReference type="GeneID" id="77219697"/>
<dbReference type="KEGG" id="pau:PA14_14820"/>
<dbReference type="PseudoCAP" id="PA14_14820"/>
<dbReference type="HOGENOM" id="CLU_060216_8_1_6"/>
<dbReference type="BioCyc" id="PAER208963:G1G74-1215-MONOMER"/>
<dbReference type="Proteomes" id="UP000000653">
    <property type="component" value="Chromosome"/>
</dbReference>
<dbReference type="GO" id="GO:0005737">
    <property type="term" value="C:cytoplasm"/>
    <property type="evidence" value="ECO:0007669"/>
    <property type="project" value="UniProtKB-SubCell"/>
</dbReference>
<dbReference type="GO" id="GO:0005524">
    <property type="term" value="F:ATP binding"/>
    <property type="evidence" value="ECO:0007669"/>
    <property type="project" value="UniProtKB-UniRule"/>
</dbReference>
<dbReference type="GO" id="GO:0046872">
    <property type="term" value="F:metal ion binding"/>
    <property type="evidence" value="ECO:0007669"/>
    <property type="project" value="UniProtKB-KW"/>
</dbReference>
<dbReference type="GO" id="GO:0004550">
    <property type="term" value="F:nucleoside diphosphate kinase activity"/>
    <property type="evidence" value="ECO:0007669"/>
    <property type="project" value="UniProtKB-UniRule"/>
</dbReference>
<dbReference type="GO" id="GO:0006241">
    <property type="term" value="P:CTP biosynthetic process"/>
    <property type="evidence" value="ECO:0007669"/>
    <property type="project" value="UniProtKB-UniRule"/>
</dbReference>
<dbReference type="GO" id="GO:0006183">
    <property type="term" value="P:GTP biosynthetic process"/>
    <property type="evidence" value="ECO:0007669"/>
    <property type="project" value="UniProtKB-UniRule"/>
</dbReference>
<dbReference type="GO" id="GO:0006228">
    <property type="term" value="P:UTP biosynthetic process"/>
    <property type="evidence" value="ECO:0007669"/>
    <property type="project" value="UniProtKB-UniRule"/>
</dbReference>
<dbReference type="CDD" id="cd04413">
    <property type="entry name" value="NDPk_I"/>
    <property type="match status" value="1"/>
</dbReference>
<dbReference type="FunFam" id="3.30.70.141:FF:000001">
    <property type="entry name" value="Nucleoside diphosphate kinase"/>
    <property type="match status" value="1"/>
</dbReference>
<dbReference type="Gene3D" id="3.30.70.141">
    <property type="entry name" value="Nucleoside diphosphate kinase-like domain"/>
    <property type="match status" value="1"/>
</dbReference>
<dbReference type="HAMAP" id="MF_00451">
    <property type="entry name" value="NDP_kinase"/>
    <property type="match status" value="1"/>
</dbReference>
<dbReference type="InterPro" id="IPR034907">
    <property type="entry name" value="NDK-like_dom"/>
</dbReference>
<dbReference type="InterPro" id="IPR036850">
    <property type="entry name" value="NDK-like_dom_sf"/>
</dbReference>
<dbReference type="InterPro" id="IPR001564">
    <property type="entry name" value="Nucleoside_diP_kinase"/>
</dbReference>
<dbReference type="InterPro" id="IPR023005">
    <property type="entry name" value="Nucleoside_diP_kinase_AS"/>
</dbReference>
<dbReference type="NCBIfam" id="NF001908">
    <property type="entry name" value="PRK00668.1"/>
    <property type="match status" value="1"/>
</dbReference>
<dbReference type="PANTHER" id="PTHR46161">
    <property type="entry name" value="NUCLEOSIDE DIPHOSPHATE KINASE"/>
    <property type="match status" value="1"/>
</dbReference>
<dbReference type="PANTHER" id="PTHR46161:SF3">
    <property type="entry name" value="NUCLEOSIDE DIPHOSPHATE KINASE DDB_G0292928-RELATED"/>
    <property type="match status" value="1"/>
</dbReference>
<dbReference type="Pfam" id="PF00334">
    <property type="entry name" value="NDK"/>
    <property type="match status" value="1"/>
</dbReference>
<dbReference type="PRINTS" id="PR01243">
    <property type="entry name" value="NUCDPKINASE"/>
</dbReference>
<dbReference type="SMART" id="SM00562">
    <property type="entry name" value="NDK"/>
    <property type="match status" value="1"/>
</dbReference>
<dbReference type="SUPFAM" id="SSF54919">
    <property type="entry name" value="Nucleoside diphosphate kinase, NDK"/>
    <property type="match status" value="1"/>
</dbReference>
<dbReference type="PROSITE" id="PS00469">
    <property type="entry name" value="NDPK"/>
    <property type="match status" value="1"/>
</dbReference>
<dbReference type="PROSITE" id="PS51374">
    <property type="entry name" value="NDPK_LIKE"/>
    <property type="match status" value="1"/>
</dbReference>
<reference key="1">
    <citation type="journal article" date="2006" name="Genome Biol.">
        <title>Genomic analysis reveals that Pseudomonas aeruginosa virulence is combinatorial.</title>
        <authorList>
            <person name="Lee D.G."/>
            <person name="Urbach J.M."/>
            <person name="Wu G."/>
            <person name="Liberati N.T."/>
            <person name="Feinbaum R.L."/>
            <person name="Miyata S."/>
            <person name="Diggins L.T."/>
            <person name="He J."/>
            <person name="Saucier M."/>
            <person name="Deziel E."/>
            <person name="Friedman L."/>
            <person name="Li L."/>
            <person name="Grills G."/>
            <person name="Montgomery K."/>
            <person name="Kucherlapati R."/>
            <person name="Rahme L.G."/>
            <person name="Ausubel F.M."/>
        </authorList>
    </citation>
    <scope>NUCLEOTIDE SEQUENCE [LARGE SCALE GENOMIC DNA]</scope>
    <source>
        <strain>UCBPP-PA14</strain>
    </source>
</reference>
<comment type="function">
    <text evidence="1">Major role in the synthesis of nucleoside triphosphates other than ATP. The ATP gamma phosphate is transferred to the NDP beta phosphate via a ping-pong mechanism, using a phosphorylated active-site intermediate.</text>
</comment>
<comment type="catalytic activity">
    <reaction evidence="1">
        <text>a 2'-deoxyribonucleoside 5'-diphosphate + ATP = a 2'-deoxyribonucleoside 5'-triphosphate + ADP</text>
        <dbReference type="Rhea" id="RHEA:44640"/>
        <dbReference type="ChEBI" id="CHEBI:30616"/>
        <dbReference type="ChEBI" id="CHEBI:61560"/>
        <dbReference type="ChEBI" id="CHEBI:73316"/>
        <dbReference type="ChEBI" id="CHEBI:456216"/>
        <dbReference type="EC" id="2.7.4.6"/>
    </reaction>
</comment>
<comment type="catalytic activity">
    <reaction evidence="1">
        <text>a ribonucleoside 5'-diphosphate + ATP = a ribonucleoside 5'-triphosphate + ADP</text>
        <dbReference type="Rhea" id="RHEA:18113"/>
        <dbReference type="ChEBI" id="CHEBI:30616"/>
        <dbReference type="ChEBI" id="CHEBI:57930"/>
        <dbReference type="ChEBI" id="CHEBI:61557"/>
        <dbReference type="ChEBI" id="CHEBI:456216"/>
        <dbReference type="EC" id="2.7.4.6"/>
    </reaction>
</comment>
<comment type="cofactor">
    <cofactor evidence="1">
        <name>Mg(2+)</name>
        <dbReference type="ChEBI" id="CHEBI:18420"/>
    </cofactor>
</comment>
<comment type="subunit">
    <text evidence="1">Homotetramer.</text>
</comment>
<comment type="subcellular location">
    <subcellularLocation>
        <location evidence="1">Cytoplasm</location>
    </subcellularLocation>
</comment>
<comment type="similarity">
    <text evidence="1">Belongs to the NDK family.</text>
</comment>
<evidence type="ECO:0000255" key="1">
    <source>
        <dbReference type="HAMAP-Rule" id="MF_00451"/>
    </source>
</evidence>
<name>NDK_PSEAB</name>
<organism>
    <name type="scientific">Pseudomonas aeruginosa (strain UCBPP-PA14)</name>
    <dbReference type="NCBI Taxonomy" id="208963"/>
    <lineage>
        <taxon>Bacteria</taxon>
        <taxon>Pseudomonadati</taxon>
        <taxon>Pseudomonadota</taxon>
        <taxon>Gammaproteobacteria</taxon>
        <taxon>Pseudomonadales</taxon>
        <taxon>Pseudomonadaceae</taxon>
        <taxon>Pseudomonas</taxon>
    </lineage>
</organism>